<dbReference type="EMBL" id="AB012245">
    <property type="protein sequence ID" value="BAB09206.1"/>
    <property type="molecule type" value="Genomic_DNA"/>
</dbReference>
<dbReference type="EMBL" id="CP002688">
    <property type="protein sequence ID" value="AED95278.1"/>
    <property type="molecule type" value="Genomic_DNA"/>
</dbReference>
<dbReference type="RefSeq" id="NP_199376.1">
    <property type="nucleotide sequence ID" value="NM_123931.3"/>
</dbReference>
<dbReference type="STRING" id="3702.Q9FK78"/>
<dbReference type="PaxDb" id="3702-AT5G45630.1"/>
<dbReference type="EnsemblPlants" id="AT5G45630.1">
    <property type="protein sequence ID" value="AT5G45630.1"/>
    <property type="gene ID" value="AT5G45630"/>
</dbReference>
<dbReference type="GeneID" id="834603"/>
<dbReference type="Gramene" id="AT5G45630.1">
    <property type="protein sequence ID" value="AT5G45630.1"/>
    <property type="gene ID" value="AT5G45630"/>
</dbReference>
<dbReference type="KEGG" id="ath:AT5G45630"/>
<dbReference type="Araport" id="AT5G45630"/>
<dbReference type="TAIR" id="AT5G45630"/>
<dbReference type="HOGENOM" id="CLU_088831_2_0_1"/>
<dbReference type="InParanoid" id="Q9FK78"/>
<dbReference type="OMA" id="TIQECNQ"/>
<dbReference type="OrthoDB" id="672058at2759"/>
<dbReference type="PRO" id="PR:Q9FK78"/>
<dbReference type="Proteomes" id="UP000006548">
    <property type="component" value="Chromosome 5"/>
</dbReference>
<dbReference type="ExpressionAtlas" id="Q9FK78">
    <property type="expression patterns" value="baseline and differential"/>
</dbReference>
<dbReference type="GO" id="GO:0005737">
    <property type="term" value="C:cytoplasm"/>
    <property type="evidence" value="ECO:0000314"/>
    <property type="project" value="UniProtKB"/>
</dbReference>
<dbReference type="GO" id="GO:0071456">
    <property type="term" value="P:cellular response to hypoxia"/>
    <property type="evidence" value="ECO:0007007"/>
    <property type="project" value="TAIR"/>
</dbReference>
<dbReference type="GO" id="GO:0010150">
    <property type="term" value="P:leaf senescence"/>
    <property type="evidence" value="ECO:0000270"/>
    <property type="project" value="UniProtKB"/>
</dbReference>
<dbReference type="GO" id="GO:0009737">
    <property type="term" value="P:response to abscisic acid"/>
    <property type="evidence" value="ECO:0000270"/>
    <property type="project" value="UniProtKB"/>
</dbReference>
<dbReference type="GO" id="GO:0009646">
    <property type="term" value="P:response to absence of light"/>
    <property type="evidence" value="ECO:0000270"/>
    <property type="project" value="UniProtKB"/>
</dbReference>
<dbReference type="GO" id="GO:0009617">
    <property type="term" value="P:response to bacterium"/>
    <property type="evidence" value="ECO:0000270"/>
    <property type="project" value="UniProtKB"/>
</dbReference>
<dbReference type="GO" id="GO:0009751">
    <property type="term" value="P:response to salicylic acid"/>
    <property type="evidence" value="ECO:0000270"/>
    <property type="project" value="UniProtKB"/>
</dbReference>
<dbReference type="InterPro" id="IPR007608">
    <property type="entry name" value="Senescence_reg_S40"/>
</dbReference>
<dbReference type="PANTHER" id="PTHR33083">
    <property type="entry name" value="EXPRESSED PROTEIN"/>
    <property type="match status" value="1"/>
</dbReference>
<dbReference type="PANTHER" id="PTHR33083:SF89">
    <property type="entry name" value="PROTEIN S40-2"/>
    <property type="match status" value="1"/>
</dbReference>
<dbReference type="Pfam" id="PF04520">
    <property type="entry name" value="Senescence_reg"/>
    <property type="match status" value="1"/>
</dbReference>
<comment type="subcellular location">
    <subcellularLocation>
        <location evidence="2">Cytoplasm</location>
    </subcellularLocation>
</comment>
<comment type="developmental stage">
    <text evidence="2">Accumulates during senescence.</text>
</comment>
<comment type="induction">
    <text evidence="2">Slightly induced by dark, abscisic acid (ABA), salicylic acid (SA) (PubMed:20238146). Triggered by pathogen attack such as Pseudomonas syringae pv. Tomato DC3000 (PubMed:20238146).</text>
</comment>
<comment type="similarity">
    <text evidence="4">Belongs to the senescence regulator S40 family.</text>
</comment>
<evidence type="ECO:0000256" key="1">
    <source>
        <dbReference type="SAM" id="MobiDB-lite"/>
    </source>
</evidence>
<evidence type="ECO:0000269" key="2">
    <source>
    </source>
</evidence>
<evidence type="ECO:0000303" key="3">
    <source>
    </source>
</evidence>
<evidence type="ECO:0000305" key="4"/>
<evidence type="ECO:0000312" key="5">
    <source>
        <dbReference type="Araport" id="AT5G45630"/>
    </source>
</evidence>
<evidence type="ECO:0000312" key="6">
    <source>
        <dbReference type="EMBL" id="BAB09206.1"/>
    </source>
</evidence>
<gene>
    <name evidence="3" type="primary">S40-2</name>
    <name evidence="5" type="ordered locus">At5g45630</name>
    <name evidence="6" type="ORF">MRA19.3</name>
</gene>
<accession>Q9FK78</accession>
<protein>
    <recommendedName>
        <fullName evidence="3">Protein S40-2</fullName>
        <shortName evidence="3">AtS40-2</shortName>
    </recommendedName>
</protein>
<keyword id="KW-0963">Cytoplasm</keyword>
<keyword id="KW-1185">Reference proteome</keyword>
<organism>
    <name type="scientific">Arabidopsis thaliana</name>
    <name type="common">Mouse-ear cress</name>
    <dbReference type="NCBI Taxonomy" id="3702"/>
    <lineage>
        <taxon>Eukaryota</taxon>
        <taxon>Viridiplantae</taxon>
        <taxon>Streptophyta</taxon>
        <taxon>Embryophyta</taxon>
        <taxon>Tracheophyta</taxon>
        <taxon>Spermatophyta</taxon>
        <taxon>Magnoliopsida</taxon>
        <taxon>eudicotyledons</taxon>
        <taxon>Gunneridae</taxon>
        <taxon>Pentapetalae</taxon>
        <taxon>rosids</taxon>
        <taxon>malvids</taxon>
        <taxon>Brassicales</taxon>
        <taxon>Brassicaceae</taxon>
        <taxon>Camelineae</taxon>
        <taxon>Arabidopsis</taxon>
    </lineage>
</organism>
<proteinExistence type="evidence at transcript level"/>
<sequence>MSEEFQESDIIFSDQSKISTSSRYTKLYNSRNDEKKGTRRHETAEKTSPVRIPTNNFRCLEWDTTEEEDDKTPPHVIIERRMKEQIAFSACTLKGRDLSRHRNSVLRMTGFLEA</sequence>
<reference key="1">
    <citation type="journal article" date="1998" name="DNA Res.">
        <title>Structural analysis of Arabidopsis thaliana chromosome 5. VI. Sequence features of the regions of 1,367,185 bp covered by 19 physically assigned P1 and TAC clones.</title>
        <authorList>
            <person name="Kotani H."/>
            <person name="Nakamura Y."/>
            <person name="Sato S."/>
            <person name="Asamizu E."/>
            <person name="Kaneko T."/>
            <person name="Miyajima N."/>
            <person name="Tabata S."/>
        </authorList>
    </citation>
    <scope>NUCLEOTIDE SEQUENCE [LARGE SCALE GENOMIC DNA]</scope>
    <source>
        <strain>cv. Columbia</strain>
    </source>
</reference>
<reference key="2">
    <citation type="journal article" date="2017" name="Plant J.">
        <title>Araport11: a complete reannotation of the Arabidopsis thaliana reference genome.</title>
        <authorList>
            <person name="Cheng C.Y."/>
            <person name="Krishnakumar V."/>
            <person name="Chan A.P."/>
            <person name="Thibaud-Nissen F."/>
            <person name="Schobel S."/>
            <person name="Town C.D."/>
        </authorList>
    </citation>
    <scope>GENOME REANNOTATION</scope>
    <source>
        <strain>cv. Columbia</strain>
    </source>
</reference>
<reference key="3">
    <citation type="journal article" date="2010" name="Plant Mol. Biol.">
        <title>Nuclear targeted AtS40 modulates senescence associated gene expression in Arabidopsis thaliana during natural development and in darkness.</title>
        <authorList>
            <person name="Fischer-Kilbienski I."/>
            <person name="Miao Y."/>
            <person name="Roitsch T."/>
            <person name="Zschiesche W."/>
            <person name="Humbeck K."/>
            <person name="Krupinska K."/>
        </authorList>
    </citation>
    <scope>DEVELOPMENTAL STAGE</scope>
    <scope>INDUCTION BY DARK; ABSCISIC ACID; SALICYLIC ACID AND PATHOGENS</scope>
    <scope>SUBCELLULAR LOCATION</scope>
    <scope>GENE FAMILY</scope>
    <scope>NOMENCLATURE</scope>
    <source>
        <strain>cv. Columbia</strain>
    </source>
</reference>
<feature type="chain" id="PRO_0000457290" description="Protein S40-2">
    <location>
        <begin position="1"/>
        <end position="114"/>
    </location>
</feature>
<feature type="region of interest" description="Disordered" evidence="1">
    <location>
        <begin position="23"/>
        <end position="50"/>
    </location>
</feature>
<feature type="compositionally biased region" description="Basic and acidic residues" evidence="1">
    <location>
        <begin position="31"/>
        <end position="45"/>
    </location>
</feature>
<name>S402_ARATH</name>